<sequence>MQTRNTFSWIKEQITRSISASLMIYIITRTSISNAYPIFAQQGYENPREATGRIVCANCHLANKPVDIEVPQAVLPDTVFEAVVRIPYDTQLKQVLANGKKGGLNVGAVLILPEGFELAPPDRISPEIKEKMGNLSFQSYRPNQKNILVIGPVPGQKYSEITFPILSPDPATKKDIHFLKYPIYVGGNRGRGQIYPDGSKSNNTVYNATASGIVSKILRKEKGGYEITIADASDGRQVVDIIPPGPELLVSEGESIKLDQPLTSNPNVGGFGQGDAEIVLQDPLRVQGLLFFFAAVILAQIFLVLKKKQFEKVQLSEMNF</sequence>
<feature type="signal peptide" evidence="2">
    <location>
        <begin position="1"/>
        <end position="35"/>
    </location>
</feature>
<feature type="chain" id="PRO_0000275419" description="Cytochrome f">
    <location>
        <begin position="36"/>
        <end position="320"/>
    </location>
</feature>
<feature type="transmembrane region" description="Helical" evidence="2">
    <location>
        <begin position="286"/>
        <end position="306"/>
    </location>
</feature>
<feature type="binding site" description="axial binding residue" evidence="2">
    <location>
        <position position="36"/>
    </location>
    <ligand>
        <name>heme</name>
        <dbReference type="ChEBI" id="CHEBI:30413"/>
    </ligand>
    <ligandPart>
        <name>Fe</name>
        <dbReference type="ChEBI" id="CHEBI:18248"/>
    </ligandPart>
</feature>
<feature type="binding site" description="covalent" evidence="2">
    <location>
        <position position="56"/>
    </location>
    <ligand>
        <name>heme</name>
        <dbReference type="ChEBI" id="CHEBI:30413"/>
    </ligand>
</feature>
<feature type="binding site" description="covalent" evidence="2">
    <location>
        <position position="59"/>
    </location>
    <ligand>
        <name>heme</name>
        <dbReference type="ChEBI" id="CHEBI:30413"/>
    </ligand>
</feature>
<feature type="binding site" description="axial binding residue" evidence="2">
    <location>
        <position position="60"/>
    </location>
    <ligand>
        <name>heme</name>
        <dbReference type="ChEBI" id="CHEBI:30413"/>
    </ligand>
    <ligandPart>
        <name>Fe</name>
        <dbReference type="ChEBI" id="CHEBI:18248"/>
    </ligandPart>
</feature>
<evidence type="ECO:0000250" key="1"/>
<evidence type="ECO:0000255" key="2">
    <source>
        <dbReference type="HAMAP-Rule" id="MF_00610"/>
    </source>
</evidence>
<protein>
    <recommendedName>
        <fullName evidence="2">Cytochrome f</fullName>
    </recommendedName>
</protein>
<name>CYF_HELAN</name>
<comment type="function">
    <text evidence="2">Component of the cytochrome b6-f complex, which mediates electron transfer between photosystem II (PSII) and photosystem I (PSI), cyclic electron flow around PSI, and state transitions.</text>
</comment>
<comment type="cofactor">
    <cofactor evidence="2">
        <name>heme</name>
        <dbReference type="ChEBI" id="CHEBI:30413"/>
    </cofactor>
    <text evidence="2">Binds 1 heme group covalently.</text>
</comment>
<comment type="subunit">
    <text evidence="1">The 4 large subunits of the cytochrome b6-f complex are cytochrome b6, subunit IV (17 kDa polypeptide, petD), cytochrome f and the Rieske protein, while the 4 small subunits are PetG, PetL, PetM and PetN. The complex functions as a dimer (By similarity).</text>
</comment>
<comment type="subcellular location">
    <subcellularLocation>
        <location evidence="2">Plastid</location>
        <location evidence="2">Chloroplast thylakoid membrane</location>
        <topology evidence="2">Single-pass membrane protein</topology>
    </subcellularLocation>
</comment>
<comment type="similarity">
    <text evidence="2">Belongs to the cytochrome f family.</text>
</comment>
<keyword id="KW-0150">Chloroplast</keyword>
<keyword id="KW-0249">Electron transport</keyword>
<keyword id="KW-0349">Heme</keyword>
<keyword id="KW-0408">Iron</keyword>
<keyword id="KW-0472">Membrane</keyword>
<keyword id="KW-0479">Metal-binding</keyword>
<keyword id="KW-0602">Photosynthesis</keyword>
<keyword id="KW-0934">Plastid</keyword>
<keyword id="KW-0732">Signal</keyword>
<keyword id="KW-0793">Thylakoid</keyword>
<keyword id="KW-0812">Transmembrane</keyword>
<keyword id="KW-1133">Transmembrane helix</keyword>
<keyword id="KW-0813">Transport</keyword>
<gene>
    <name evidence="2" type="primary">petA</name>
</gene>
<reference key="1">
    <citation type="submission" date="2006-01" db="EMBL/GenBank/DDBJ databases">
        <title>A comparison of the first two published chloroplast genomes in Asteraceae: Lactuca and Helianthus.</title>
        <authorList>
            <person name="Timme R.E."/>
            <person name="Kuehl J.V."/>
            <person name="Boore J.L."/>
            <person name="Jansen R.K."/>
        </authorList>
    </citation>
    <scope>NUCLEOTIDE SEQUENCE [LARGE SCALE GENOMIC DNA]</scope>
    <source>
        <strain>cv. HA383</strain>
    </source>
</reference>
<proteinExistence type="inferred from homology"/>
<dbReference type="EMBL" id="DQ383815">
    <property type="protein sequence ID" value="ABD47159.1"/>
    <property type="molecule type" value="Genomic_DNA"/>
</dbReference>
<dbReference type="RefSeq" id="YP_588130.1">
    <property type="nucleotide sequence ID" value="NC_007977.1"/>
</dbReference>
<dbReference type="SMR" id="Q1KXU6"/>
<dbReference type="EnsemblPlants" id="mRNA:HanXRQr2_Chr02g0061591">
    <property type="protein sequence ID" value="CDS:HanXRQr2_Chr02g0061591.1"/>
    <property type="gene ID" value="HanXRQr2_Chr02g0061591"/>
</dbReference>
<dbReference type="EnsemblPlants" id="mRNA:HanXRQr2_Chr11g0496401">
    <property type="protein sequence ID" value="CDS:HanXRQr2_Chr11g0496401.1"/>
    <property type="gene ID" value="HanXRQr2_Chr11g0496401"/>
</dbReference>
<dbReference type="GeneID" id="4055667"/>
<dbReference type="Gramene" id="mRNA:HanXRQr2_Chr02g0061591">
    <property type="protein sequence ID" value="CDS:HanXRQr2_Chr02g0061591.1"/>
    <property type="gene ID" value="HanXRQr2_Chr02g0061591"/>
</dbReference>
<dbReference type="Gramene" id="mRNA:HanXRQr2_Chr11g0496401">
    <property type="protein sequence ID" value="CDS:HanXRQr2_Chr11g0496401.1"/>
    <property type="gene ID" value="HanXRQr2_Chr11g0496401"/>
</dbReference>
<dbReference type="KEGG" id="han:4055667"/>
<dbReference type="OrthoDB" id="415867at2759"/>
<dbReference type="PhylomeDB" id="Q1KXU6"/>
<dbReference type="GO" id="GO:0009535">
    <property type="term" value="C:chloroplast thylakoid membrane"/>
    <property type="evidence" value="ECO:0007669"/>
    <property type="project" value="UniProtKB-SubCell"/>
</dbReference>
<dbReference type="GO" id="GO:0009055">
    <property type="term" value="F:electron transfer activity"/>
    <property type="evidence" value="ECO:0007669"/>
    <property type="project" value="UniProtKB-UniRule"/>
</dbReference>
<dbReference type="GO" id="GO:0020037">
    <property type="term" value="F:heme binding"/>
    <property type="evidence" value="ECO:0007669"/>
    <property type="project" value="InterPro"/>
</dbReference>
<dbReference type="GO" id="GO:0005506">
    <property type="term" value="F:iron ion binding"/>
    <property type="evidence" value="ECO:0007669"/>
    <property type="project" value="InterPro"/>
</dbReference>
<dbReference type="GO" id="GO:0015979">
    <property type="term" value="P:photosynthesis"/>
    <property type="evidence" value="ECO:0007669"/>
    <property type="project" value="UniProtKB-UniRule"/>
</dbReference>
<dbReference type="FunFam" id="1.20.5.700:FF:000001">
    <property type="entry name" value="Cytochrome f"/>
    <property type="match status" value="1"/>
</dbReference>
<dbReference type="FunFam" id="2.40.50.100:FF:000007">
    <property type="entry name" value="Cytochrome f"/>
    <property type="match status" value="1"/>
</dbReference>
<dbReference type="FunFam" id="2.60.40.830:FF:000001">
    <property type="entry name" value="Cytochrome f"/>
    <property type="match status" value="1"/>
</dbReference>
<dbReference type="Gene3D" id="2.40.50.100">
    <property type="match status" value="1"/>
</dbReference>
<dbReference type="Gene3D" id="2.60.40.830">
    <property type="entry name" value="Cytochrome f large domain"/>
    <property type="match status" value="1"/>
</dbReference>
<dbReference type="Gene3D" id="1.20.5.700">
    <property type="entry name" value="Single helix bin"/>
    <property type="match status" value="1"/>
</dbReference>
<dbReference type="HAMAP" id="MF_00610">
    <property type="entry name" value="Cytb6_f_cytF"/>
    <property type="match status" value="1"/>
</dbReference>
<dbReference type="InterPro" id="IPR024058">
    <property type="entry name" value="Cyt-f_TM"/>
</dbReference>
<dbReference type="InterPro" id="IPR002325">
    <property type="entry name" value="Cyt_f"/>
</dbReference>
<dbReference type="InterPro" id="IPR024094">
    <property type="entry name" value="Cyt_f_lg_dom"/>
</dbReference>
<dbReference type="InterPro" id="IPR036826">
    <property type="entry name" value="Cyt_f_lg_dom_sf"/>
</dbReference>
<dbReference type="InterPro" id="IPR011054">
    <property type="entry name" value="Rudment_hybrid_motif"/>
</dbReference>
<dbReference type="PANTHER" id="PTHR33288">
    <property type="match status" value="1"/>
</dbReference>
<dbReference type="PANTHER" id="PTHR33288:SF10">
    <property type="entry name" value="CYTOCHROME F"/>
    <property type="match status" value="1"/>
</dbReference>
<dbReference type="Pfam" id="PF01333">
    <property type="entry name" value="Apocytochr_F_C"/>
    <property type="match status" value="1"/>
</dbReference>
<dbReference type="Pfam" id="PF16639">
    <property type="entry name" value="Apocytochr_F_N"/>
    <property type="match status" value="1"/>
</dbReference>
<dbReference type="PRINTS" id="PR00610">
    <property type="entry name" value="CYTOCHROMEF"/>
</dbReference>
<dbReference type="SUPFAM" id="SSF103431">
    <property type="entry name" value="Cytochrome f subunit of the cytochrome b6f complex, transmembrane anchor"/>
    <property type="match status" value="1"/>
</dbReference>
<dbReference type="SUPFAM" id="SSF49441">
    <property type="entry name" value="Cytochrome f, large domain"/>
    <property type="match status" value="1"/>
</dbReference>
<dbReference type="SUPFAM" id="SSF51246">
    <property type="entry name" value="Rudiment single hybrid motif"/>
    <property type="match status" value="1"/>
</dbReference>
<dbReference type="PROSITE" id="PS51010">
    <property type="entry name" value="CYTF"/>
    <property type="match status" value="1"/>
</dbReference>
<geneLocation type="chloroplast"/>
<organism>
    <name type="scientific">Helianthus annuus</name>
    <name type="common">Common sunflower</name>
    <dbReference type="NCBI Taxonomy" id="4232"/>
    <lineage>
        <taxon>Eukaryota</taxon>
        <taxon>Viridiplantae</taxon>
        <taxon>Streptophyta</taxon>
        <taxon>Embryophyta</taxon>
        <taxon>Tracheophyta</taxon>
        <taxon>Spermatophyta</taxon>
        <taxon>Magnoliopsida</taxon>
        <taxon>eudicotyledons</taxon>
        <taxon>Gunneridae</taxon>
        <taxon>Pentapetalae</taxon>
        <taxon>asterids</taxon>
        <taxon>campanulids</taxon>
        <taxon>Asterales</taxon>
        <taxon>Asteraceae</taxon>
        <taxon>Asteroideae</taxon>
        <taxon>Heliantheae alliance</taxon>
        <taxon>Heliantheae</taxon>
        <taxon>Helianthus</taxon>
    </lineage>
</organism>
<accession>Q1KXU6</accession>